<evidence type="ECO:0000255" key="1">
    <source>
        <dbReference type="HAMAP-Rule" id="MF_01393"/>
    </source>
</evidence>
<reference key="1">
    <citation type="submission" date="2007-04" db="EMBL/GenBank/DDBJ databases">
        <title>Complete sequence of Shewanella putrefaciens CN-32.</title>
        <authorList>
            <consortium name="US DOE Joint Genome Institute"/>
            <person name="Copeland A."/>
            <person name="Lucas S."/>
            <person name="Lapidus A."/>
            <person name="Barry K."/>
            <person name="Detter J.C."/>
            <person name="Glavina del Rio T."/>
            <person name="Hammon N."/>
            <person name="Israni S."/>
            <person name="Dalin E."/>
            <person name="Tice H."/>
            <person name="Pitluck S."/>
            <person name="Chain P."/>
            <person name="Malfatti S."/>
            <person name="Shin M."/>
            <person name="Vergez L."/>
            <person name="Schmutz J."/>
            <person name="Larimer F."/>
            <person name="Land M."/>
            <person name="Hauser L."/>
            <person name="Kyrpides N."/>
            <person name="Mikhailova N."/>
            <person name="Romine M.F."/>
            <person name="Fredrickson J."/>
            <person name="Tiedje J."/>
            <person name="Richardson P."/>
        </authorList>
    </citation>
    <scope>NUCLEOTIDE SEQUENCE [LARGE SCALE GENOMIC DNA]</scope>
    <source>
        <strain>CN-32 / ATCC BAA-453</strain>
    </source>
</reference>
<accession>A4YCI4</accession>
<organism>
    <name type="scientific">Shewanella putrefaciens (strain CN-32 / ATCC BAA-453)</name>
    <dbReference type="NCBI Taxonomy" id="319224"/>
    <lineage>
        <taxon>Bacteria</taxon>
        <taxon>Pseudomonadati</taxon>
        <taxon>Pseudomonadota</taxon>
        <taxon>Gammaproteobacteria</taxon>
        <taxon>Alteromonadales</taxon>
        <taxon>Shewanellaceae</taxon>
        <taxon>Shewanella</taxon>
    </lineage>
</organism>
<keyword id="KW-0066">ATP synthesis</keyword>
<keyword id="KW-0997">Cell inner membrane</keyword>
<keyword id="KW-1003">Cell membrane</keyword>
<keyword id="KW-0138">CF(0)</keyword>
<keyword id="KW-0375">Hydrogen ion transport</keyword>
<keyword id="KW-0406">Ion transport</keyword>
<keyword id="KW-0472">Membrane</keyword>
<keyword id="KW-0812">Transmembrane</keyword>
<keyword id="KW-1133">Transmembrane helix</keyword>
<keyword id="KW-0813">Transport</keyword>
<feature type="chain" id="PRO_0000362457" description="ATP synthase subunit a">
    <location>
        <begin position="1"/>
        <end position="273"/>
    </location>
</feature>
<feature type="transmembrane region" description="Helical" evidence="1">
    <location>
        <begin position="44"/>
        <end position="64"/>
    </location>
</feature>
<feature type="transmembrane region" description="Helical" evidence="1">
    <location>
        <begin position="104"/>
        <end position="124"/>
    </location>
</feature>
<feature type="transmembrane region" description="Helical" evidence="1">
    <location>
        <begin position="149"/>
        <end position="169"/>
    </location>
</feature>
<feature type="transmembrane region" description="Helical" evidence="1">
    <location>
        <begin position="223"/>
        <end position="243"/>
    </location>
</feature>
<feature type="transmembrane region" description="Helical" evidence="1">
    <location>
        <begin position="244"/>
        <end position="264"/>
    </location>
</feature>
<sequence>MATTGEALNASEYIQHHLTNAKMCSTDGGVAFNHACQDAGFWTWHIDSLLFSVGLGVLFLWLFYKTGQKATAGVPGKLQCFVEMCVEGVDKIAKESFHGKNVVIAPLALTIFIWVFLMNFMDLIPVDFIPEAANRFLGVPYLKVVPTTDLNVTLGLSLSVFVLIVFYSIKAKGIGGFTKELTLQPFNHWSLIPVNFILESVTLIAKPISLALRLFGNLYAGELIFILIALMPWWAQFALSVPWAIFHILIIVLQAFIFMMLTIVYLSMAHEEH</sequence>
<proteinExistence type="inferred from homology"/>
<gene>
    <name evidence="1" type="primary">atpB</name>
    <name type="ordered locus">Sputcn32_3962</name>
</gene>
<protein>
    <recommendedName>
        <fullName evidence="1">ATP synthase subunit a</fullName>
    </recommendedName>
    <alternativeName>
        <fullName evidence="1">ATP synthase F0 sector subunit a</fullName>
    </alternativeName>
    <alternativeName>
        <fullName evidence="1">F-ATPase subunit 6</fullName>
    </alternativeName>
</protein>
<dbReference type="EMBL" id="CP000681">
    <property type="protein sequence ID" value="ABP77667.1"/>
    <property type="molecule type" value="Genomic_DNA"/>
</dbReference>
<dbReference type="SMR" id="A4YCI4"/>
<dbReference type="STRING" id="319224.Sputcn32_3962"/>
<dbReference type="KEGG" id="spc:Sputcn32_3962"/>
<dbReference type="eggNOG" id="COG0356">
    <property type="taxonomic scope" value="Bacteria"/>
</dbReference>
<dbReference type="HOGENOM" id="CLU_041018_1_0_6"/>
<dbReference type="GO" id="GO:0005886">
    <property type="term" value="C:plasma membrane"/>
    <property type="evidence" value="ECO:0007669"/>
    <property type="project" value="UniProtKB-SubCell"/>
</dbReference>
<dbReference type="GO" id="GO:0045259">
    <property type="term" value="C:proton-transporting ATP synthase complex"/>
    <property type="evidence" value="ECO:0007669"/>
    <property type="project" value="UniProtKB-KW"/>
</dbReference>
<dbReference type="GO" id="GO:0046933">
    <property type="term" value="F:proton-transporting ATP synthase activity, rotational mechanism"/>
    <property type="evidence" value="ECO:0007669"/>
    <property type="project" value="UniProtKB-UniRule"/>
</dbReference>
<dbReference type="GO" id="GO:0042777">
    <property type="term" value="P:proton motive force-driven plasma membrane ATP synthesis"/>
    <property type="evidence" value="ECO:0007669"/>
    <property type="project" value="TreeGrafter"/>
</dbReference>
<dbReference type="CDD" id="cd00310">
    <property type="entry name" value="ATP-synt_Fo_a_6"/>
    <property type="match status" value="1"/>
</dbReference>
<dbReference type="FunFam" id="1.20.120.220:FF:000002">
    <property type="entry name" value="ATP synthase subunit a"/>
    <property type="match status" value="1"/>
</dbReference>
<dbReference type="Gene3D" id="1.20.120.220">
    <property type="entry name" value="ATP synthase, F0 complex, subunit A"/>
    <property type="match status" value="1"/>
</dbReference>
<dbReference type="HAMAP" id="MF_01393">
    <property type="entry name" value="ATP_synth_a_bact"/>
    <property type="match status" value="1"/>
</dbReference>
<dbReference type="InterPro" id="IPR045082">
    <property type="entry name" value="ATP_syn_F0_a_bact/chloroplast"/>
</dbReference>
<dbReference type="InterPro" id="IPR000568">
    <property type="entry name" value="ATP_synth_F0_asu"/>
</dbReference>
<dbReference type="InterPro" id="IPR023011">
    <property type="entry name" value="ATP_synth_F0_asu_AS"/>
</dbReference>
<dbReference type="InterPro" id="IPR035908">
    <property type="entry name" value="F0_ATP_A_sf"/>
</dbReference>
<dbReference type="NCBIfam" id="TIGR01131">
    <property type="entry name" value="ATP_synt_6_or_A"/>
    <property type="match status" value="1"/>
</dbReference>
<dbReference type="NCBIfam" id="NF004477">
    <property type="entry name" value="PRK05815.1-1"/>
    <property type="match status" value="1"/>
</dbReference>
<dbReference type="PANTHER" id="PTHR42823">
    <property type="entry name" value="ATP SYNTHASE SUBUNIT A, CHLOROPLASTIC"/>
    <property type="match status" value="1"/>
</dbReference>
<dbReference type="PANTHER" id="PTHR42823:SF3">
    <property type="entry name" value="ATP SYNTHASE SUBUNIT A, CHLOROPLASTIC"/>
    <property type="match status" value="1"/>
</dbReference>
<dbReference type="Pfam" id="PF00119">
    <property type="entry name" value="ATP-synt_A"/>
    <property type="match status" value="1"/>
</dbReference>
<dbReference type="PRINTS" id="PR00123">
    <property type="entry name" value="ATPASEA"/>
</dbReference>
<dbReference type="SUPFAM" id="SSF81336">
    <property type="entry name" value="F1F0 ATP synthase subunit A"/>
    <property type="match status" value="1"/>
</dbReference>
<dbReference type="PROSITE" id="PS00449">
    <property type="entry name" value="ATPASE_A"/>
    <property type="match status" value="1"/>
</dbReference>
<comment type="function">
    <text evidence="1">Key component of the proton channel; it plays a direct role in the translocation of protons across the membrane.</text>
</comment>
<comment type="subunit">
    <text evidence="1">F-type ATPases have 2 components, CF(1) - the catalytic core - and CF(0) - the membrane proton channel. CF(1) has five subunits: alpha(3), beta(3), gamma(1), delta(1), epsilon(1). CF(0) has three main subunits: a(1), b(2) and c(9-12). The alpha and beta chains form an alternating ring which encloses part of the gamma chain. CF(1) is attached to CF(0) by a central stalk formed by the gamma and epsilon chains, while a peripheral stalk is formed by the delta and b chains.</text>
</comment>
<comment type="subcellular location">
    <subcellularLocation>
        <location evidence="1">Cell inner membrane</location>
        <topology evidence="1">Multi-pass membrane protein</topology>
    </subcellularLocation>
</comment>
<comment type="similarity">
    <text evidence="1">Belongs to the ATPase A chain family.</text>
</comment>
<name>ATP6_SHEPC</name>